<evidence type="ECO:0000255" key="1">
    <source>
        <dbReference type="HAMAP-Rule" id="MF_00789"/>
    </source>
</evidence>
<gene>
    <name type="ordered locus">Ent638_1476</name>
</gene>
<organism>
    <name type="scientific">Enterobacter sp. (strain 638)</name>
    <dbReference type="NCBI Taxonomy" id="399742"/>
    <lineage>
        <taxon>Bacteria</taxon>
        <taxon>Pseudomonadati</taxon>
        <taxon>Pseudomonadota</taxon>
        <taxon>Gammaproteobacteria</taxon>
        <taxon>Enterobacterales</taxon>
        <taxon>Enterobacteriaceae</taxon>
        <taxon>Enterobacter</taxon>
    </lineage>
</organism>
<reference key="1">
    <citation type="journal article" date="2010" name="PLoS Genet.">
        <title>Genome sequence of the plant growth promoting endophytic bacterium Enterobacter sp. 638.</title>
        <authorList>
            <person name="Taghavi S."/>
            <person name="van der Lelie D."/>
            <person name="Hoffman A."/>
            <person name="Zhang Y.B."/>
            <person name="Walla M.D."/>
            <person name="Vangronsveld J."/>
            <person name="Newman L."/>
            <person name="Monchy S."/>
        </authorList>
    </citation>
    <scope>NUCLEOTIDE SEQUENCE [LARGE SCALE GENOMIC DNA]</scope>
    <source>
        <strain>638</strain>
    </source>
</reference>
<proteinExistence type="inferred from homology"/>
<feature type="signal peptide" evidence="1">
    <location>
        <begin position="1"/>
        <end position="20"/>
    </location>
</feature>
<feature type="chain" id="PRO_5000237804" description="UPF0319 protein Ent638_1476">
    <location>
        <begin position="21"/>
        <end position="220"/>
    </location>
</feature>
<comment type="similarity">
    <text evidence="1">Belongs to the UPF0319 family.</text>
</comment>
<protein>
    <recommendedName>
        <fullName evidence="1">UPF0319 protein Ent638_1476</fullName>
    </recommendedName>
</protein>
<accession>A4W8X6</accession>
<sequence length="220" mass="24490">MKTGIVSAVLALVMPVCVYATTLRLSTDIDLLVLDGKKVSSSLLRGADSIELDNGPHQIVFRIEKNIRLSNHEQRLYISPPLVVSFNTQKISQVNFNLPRLENEQESEAFEAAPRIELLDGDAMPIPVKLDILALTKTPKGTDYEADTERYNKAGKSASLPGFATMMADDSTLLSGVSELDVIPPQSQTLTEQRLKFWFQQADPETRTRFLQWAKQQPSS</sequence>
<keyword id="KW-0732">Signal</keyword>
<dbReference type="EMBL" id="CP000653">
    <property type="protein sequence ID" value="ABP60156.1"/>
    <property type="molecule type" value="Genomic_DNA"/>
</dbReference>
<dbReference type="RefSeq" id="WP_012016873.1">
    <property type="nucleotide sequence ID" value="NC_009436.1"/>
</dbReference>
<dbReference type="STRING" id="399742.Ent638_1476"/>
<dbReference type="KEGG" id="ent:Ent638_1476"/>
<dbReference type="eggNOG" id="COG3110">
    <property type="taxonomic scope" value="Bacteria"/>
</dbReference>
<dbReference type="HOGENOM" id="CLU_073782_2_0_6"/>
<dbReference type="OrthoDB" id="6428208at2"/>
<dbReference type="Proteomes" id="UP000000230">
    <property type="component" value="Chromosome"/>
</dbReference>
<dbReference type="HAMAP" id="MF_00789">
    <property type="entry name" value="UPF0319"/>
    <property type="match status" value="1"/>
</dbReference>
<dbReference type="InterPro" id="IPR018635">
    <property type="entry name" value="UPF0319"/>
</dbReference>
<dbReference type="NCBIfam" id="NF047712">
    <property type="entry name" value="CrliSynInhib"/>
    <property type="match status" value="1"/>
</dbReference>
<dbReference type="NCBIfam" id="NF002967">
    <property type="entry name" value="PRK03641.1"/>
    <property type="match status" value="1"/>
</dbReference>
<dbReference type="PANTHER" id="PTHR38108">
    <property type="entry name" value="UPF0319 PROTEIN YCCT"/>
    <property type="match status" value="1"/>
</dbReference>
<dbReference type="PANTHER" id="PTHR38108:SF1">
    <property type="entry name" value="UPF0319 PROTEIN YCCT"/>
    <property type="match status" value="1"/>
</dbReference>
<dbReference type="Pfam" id="PF09829">
    <property type="entry name" value="DUF2057"/>
    <property type="match status" value="1"/>
</dbReference>
<name>Y1476_ENT38</name>